<evidence type="ECO:0000255" key="1">
    <source>
        <dbReference type="HAMAP-Rule" id="MF_01343"/>
    </source>
</evidence>
<evidence type="ECO:0000305" key="2"/>
<accession>Q1CC10</accession>
<keyword id="KW-0687">Ribonucleoprotein</keyword>
<keyword id="KW-0689">Ribosomal protein</keyword>
<keyword id="KW-0694">RNA-binding</keyword>
<keyword id="KW-0699">rRNA-binding</keyword>
<protein>
    <recommendedName>
        <fullName evidence="1">Small ribosomal subunit protein uS15</fullName>
    </recommendedName>
    <alternativeName>
        <fullName evidence="2">30S ribosomal protein S15</fullName>
    </alternativeName>
</protein>
<organism>
    <name type="scientific">Yersinia pestis bv. Antiqua (strain Antiqua)</name>
    <dbReference type="NCBI Taxonomy" id="360102"/>
    <lineage>
        <taxon>Bacteria</taxon>
        <taxon>Pseudomonadati</taxon>
        <taxon>Pseudomonadota</taxon>
        <taxon>Gammaproteobacteria</taxon>
        <taxon>Enterobacterales</taxon>
        <taxon>Yersiniaceae</taxon>
        <taxon>Yersinia</taxon>
    </lineage>
</organism>
<reference key="1">
    <citation type="journal article" date="2006" name="J. Bacteriol.">
        <title>Complete genome sequence of Yersinia pestis strains Antiqua and Nepal516: evidence of gene reduction in an emerging pathogen.</title>
        <authorList>
            <person name="Chain P.S.G."/>
            <person name="Hu P."/>
            <person name="Malfatti S.A."/>
            <person name="Radnedge L."/>
            <person name="Larimer F."/>
            <person name="Vergez L.M."/>
            <person name="Worsham P."/>
            <person name="Chu M.C."/>
            <person name="Andersen G.L."/>
        </authorList>
    </citation>
    <scope>NUCLEOTIDE SEQUENCE [LARGE SCALE GENOMIC DNA]</scope>
    <source>
        <strain>Antiqua</strain>
    </source>
</reference>
<sequence>MSLSVEAKAKIVADFGRGTNDTGSSEVQVALLTAQINHLQGHFSEHKKDHHSRRGLLRMVSTRRKLLDYLKRQDVARYASLIERLGLRR</sequence>
<comment type="function">
    <text evidence="1">One of the primary rRNA binding proteins, it binds directly to 16S rRNA where it helps nucleate assembly of the platform of the 30S subunit by binding and bridging several RNA helices of the 16S rRNA.</text>
</comment>
<comment type="function">
    <text evidence="1">Forms an intersubunit bridge (bridge B4) with the 23S rRNA of the 50S subunit in the ribosome.</text>
</comment>
<comment type="subunit">
    <text evidence="1">Part of the 30S ribosomal subunit. Forms a bridge to the 50S subunit in the 70S ribosome, contacting the 23S rRNA.</text>
</comment>
<comment type="similarity">
    <text evidence="1">Belongs to the universal ribosomal protein uS15 family.</text>
</comment>
<name>RS15_YERPA</name>
<feature type="chain" id="PRO_0000255549" description="Small ribosomal subunit protein uS15">
    <location>
        <begin position="1"/>
        <end position="89"/>
    </location>
</feature>
<proteinExistence type="inferred from homology"/>
<dbReference type="EMBL" id="CP000308">
    <property type="protein sequence ID" value="ABG12012.1"/>
    <property type="molecule type" value="Genomic_DNA"/>
</dbReference>
<dbReference type="RefSeq" id="WP_002209257.1">
    <property type="nucleotide sequence ID" value="NZ_CP009906.1"/>
</dbReference>
<dbReference type="SMR" id="Q1CC10"/>
<dbReference type="GeneID" id="96663990"/>
<dbReference type="KEGG" id="ypa:YPA_0043"/>
<dbReference type="Proteomes" id="UP000001971">
    <property type="component" value="Chromosome"/>
</dbReference>
<dbReference type="GO" id="GO:0022627">
    <property type="term" value="C:cytosolic small ribosomal subunit"/>
    <property type="evidence" value="ECO:0007669"/>
    <property type="project" value="TreeGrafter"/>
</dbReference>
<dbReference type="GO" id="GO:0019843">
    <property type="term" value="F:rRNA binding"/>
    <property type="evidence" value="ECO:0007669"/>
    <property type="project" value="UniProtKB-UniRule"/>
</dbReference>
<dbReference type="GO" id="GO:0003735">
    <property type="term" value="F:structural constituent of ribosome"/>
    <property type="evidence" value="ECO:0007669"/>
    <property type="project" value="InterPro"/>
</dbReference>
<dbReference type="GO" id="GO:0006412">
    <property type="term" value="P:translation"/>
    <property type="evidence" value="ECO:0007669"/>
    <property type="project" value="UniProtKB-UniRule"/>
</dbReference>
<dbReference type="CDD" id="cd00353">
    <property type="entry name" value="Ribosomal_S15p_S13e"/>
    <property type="match status" value="1"/>
</dbReference>
<dbReference type="FunFam" id="1.10.287.10:FF:000002">
    <property type="entry name" value="30S ribosomal protein S15"/>
    <property type="match status" value="1"/>
</dbReference>
<dbReference type="Gene3D" id="6.10.250.3130">
    <property type="match status" value="1"/>
</dbReference>
<dbReference type="Gene3D" id="1.10.287.10">
    <property type="entry name" value="S15/NS1, RNA-binding"/>
    <property type="match status" value="1"/>
</dbReference>
<dbReference type="HAMAP" id="MF_01343_B">
    <property type="entry name" value="Ribosomal_uS15_B"/>
    <property type="match status" value="1"/>
</dbReference>
<dbReference type="InterPro" id="IPR000589">
    <property type="entry name" value="Ribosomal_uS15"/>
</dbReference>
<dbReference type="InterPro" id="IPR005290">
    <property type="entry name" value="Ribosomal_uS15_bac-type"/>
</dbReference>
<dbReference type="InterPro" id="IPR009068">
    <property type="entry name" value="uS15_NS1_RNA-bd_sf"/>
</dbReference>
<dbReference type="NCBIfam" id="TIGR00952">
    <property type="entry name" value="S15_bact"/>
    <property type="match status" value="1"/>
</dbReference>
<dbReference type="PANTHER" id="PTHR23321">
    <property type="entry name" value="RIBOSOMAL PROTEIN S15, BACTERIAL AND ORGANELLAR"/>
    <property type="match status" value="1"/>
</dbReference>
<dbReference type="PANTHER" id="PTHR23321:SF26">
    <property type="entry name" value="SMALL RIBOSOMAL SUBUNIT PROTEIN US15M"/>
    <property type="match status" value="1"/>
</dbReference>
<dbReference type="Pfam" id="PF00312">
    <property type="entry name" value="Ribosomal_S15"/>
    <property type="match status" value="1"/>
</dbReference>
<dbReference type="SMART" id="SM01387">
    <property type="entry name" value="Ribosomal_S15"/>
    <property type="match status" value="1"/>
</dbReference>
<dbReference type="SUPFAM" id="SSF47060">
    <property type="entry name" value="S15/NS1 RNA-binding domain"/>
    <property type="match status" value="1"/>
</dbReference>
<dbReference type="PROSITE" id="PS00362">
    <property type="entry name" value="RIBOSOMAL_S15"/>
    <property type="match status" value="1"/>
</dbReference>
<gene>
    <name evidence="1" type="primary">rpsO</name>
    <name type="ordered locus">YPA_0043</name>
</gene>